<dbReference type="EMBL" id="CU928162">
    <property type="protein sequence ID" value="CAR09973.2"/>
    <property type="molecule type" value="Genomic_DNA"/>
</dbReference>
<dbReference type="RefSeq" id="WP_001300397.1">
    <property type="nucleotide sequence ID" value="NC_011745.1"/>
</dbReference>
<dbReference type="SMR" id="B7N0V5"/>
<dbReference type="GeneID" id="93778813"/>
<dbReference type="KEGG" id="ecq:ECED1_3830"/>
<dbReference type="HOGENOM" id="CLU_070525_1_1_6"/>
<dbReference type="Proteomes" id="UP000000748">
    <property type="component" value="Chromosome"/>
</dbReference>
<dbReference type="GO" id="GO:0005829">
    <property type="term" value="C:cytosol"/>
    <property type="evidence" value="ECO:0007669"/>
    <property type="project" value="TreeGrafter"/>
</dbReference>
<dbReference type="GO" id="GO:0000028">
    <property type="term" value="P:ribosomal small subunit assembly"/>
    <property type="evidence" value="ECO:0007669"/>
    <property type="project" value="TreeGrafter"/>
</dbReference>
<dbReference type="GO" id="GO:0006412">
    <property type="term" value="P:translation"/>
    <property type="evidence" value="ECO:0007669"/>
    <property type="project" value="TreeGrafter"/>
</dbReference>
<dbReference type="CDD" id="cd01734">
    <property type="entry name" value="YlxS_C"/>
    <property type="match status" value="1"/>
</dbReference>
<dbReference type="FunFam" id="2.30.30.180:FF:000001">
    <property type="entry name" value="Ribosome maturation factor RimP"/>
    <property type="match status" value="1"/>
</dbReference>
<dbReference type="FunFam" id="3.30.300.70:FF:000001">
    <property type="entry name" value="Ribosome maturation factor RimP"/>
    <property type="match status" value="1"/>
</dbReference>
<dbReference type="Gene3D" id="2.30.30.180">
    <property type="entry name" value="Ribosome maturation factor RimP, C-terminal domain"/>
    <property type="match status" value="1"/>
</dbReference>
<dbReference type="Gene3D" id="3.30.300.70">
    <property type="entry name" value="RimP-like superfamily, N-terminal"/>
    <property type="match status" value="1"/>
</dbReference>
<dbReference type="HAMAP" id="MF_01077">
    <property type="entry name" value="RimP"/>
    <property type="match status" value="1"/>
</dbReference>
<dbReference type="InterPro" id="IPR003728">
    <property type="entry name" value="Ribosome_maturation_RimP"/>
</dbReference>
<dbReference type="InterPro" id="IPR028998">
    <property type="entry name" value="RimP_C"/>
</dbReference>
<dbReference type="InterPro" id="IPR036847">
    <property type="entry name" value="RimP_C_sf"/>
</dbReference>
<dbReference type="InterPro" id="IPR028989">
    <property type="entry name" value="RimP_N"/>
</dbReference>
<dbReference type="InterPro" id="IPR035956">
    <property type="entry name" value="RimP_N_sf"/>
</dbReference>
<dbReference type="NCBIfam" id="NF000927">
    <property type="entry name" value="PRK00092.1-1"/>
    <property type="match status" value="1"/>
</dbReference>
<dbReference type="PANTHER" id="PTHR33867">
    <property type="entry name" value="RIBOSOME MATURATION FACTOR RIMP"/>
    <property type="match status" value="1"/>
</dbReference>
<dbReference type="PANTHER" id="PTHR33867:SF1">
    <property type="entry name" value="RIBOSOME MATURATION FACTOR RIMP"/>
    <property type="match status" value="1"/>
</dbReference>
<dbReference type="Pfam" id="PF17384">
    <property type="entry name" value="DUF150_C"/>
    <property type="match status" value="1"/>
</dbReference>
<dbReference type="Pfam" id="PF02576">
    <property type="entry name" value="RimP_N"/>
    <property type="match status" value="1"/>
</dbReference>
<dbReference type="SUPFAM" id="SSF74942">
    <property type="entry name" value="YhbC-like, C-terminal domain"/>
    <property type="match status" value="1"/>
</dbReference>
<dbReference type="SUPFAM" id="SSF75420">
    <property type="entry name" value="YhbC-like, N-terminal domain"/>
    <property type="match status" value="1"/>
</dbReference>
<reference key="1">
    <citation type="journal article" date="2009" name="PLoS Genet.">
        <title>Organised genome dynamics in the Escherichia coli species results in highly diverse adaptive paths.</title>
        <authorList>
            <person name="Touchon M."/>
            <person name="Hoede C."/>
            <person name="Tenaillon O."/>
            <person name="Barbe V."/>
            <person name="Baeriswyl S."/>
            <person name="Bidet P."/>
            <person name="Bingen E."/>
            <person name="Bonacorsi S."/>
            <person name="Bouchier C."/>
            <person name="Bouvet O."/>
            <person name="Calteau A."/>
            <person name="Chiapello H."/>
            <person name="Clermont O."/>
            <person name="Cruveiller S."/>
            <person name="Danchin A."/>
            <person name="Diard M."/>
            <person name="Dossat C."/>
            <person name="Karoui M.E."/>
            <person name="Frapy E."/>
            <person name="Garry L."/>
            <person name="Ghigo J.M."/>
            <person name="Gilles A.M."/>
            <person name="Johnson J."/>
            <person name="Le Bouguenec C."/>
            <person name="Lescat M."/>
            <person name="Mangenot S."/>
            <person name="Martinez-Jehanne V."/>
            <person name="Matic I."/>
            <person name="Nassif X."/>
            <person name="Oztas S."/>
            <person name="Petit M.A."/>
            <person name="Pichon C."/>
            <person name="Rouy Z."/>
            <person name="Ruf C.S."/>
            <person name="Schneider D."/>
            <person name="Tourret J."/>
            <person name="Vacherie B."/>
            <person name="Vallenet D."/>
            <person name="Medigue C."/>
            <person name="Rocha E.P.C."/>
            <person name="Denamur E."/>
        </authorList>
    </citation>
    <scope>NUCLEOTIDE SEQUENCE [LARGE SCALE GENOMIC DNA]</scope>
    <source>
        <strain>ED1a</strain>
    </source>
</reference>
<sequence length="150" mass="16651">MSTLEQKLTEMITAPVEALGFELVGIEFIRGRTSTLRIYIDSEDGINVDDCADVSHQVSAVLDVEDPITVAYNLEVSSPGLDRPLFTAEHYARFVGEEVTLVLRMAVQNRRKWQGVIKAVDGEMITVTVEGKDEVFALSNIQKANLVPHF</sequence>
<organism>
    <name type="scientific">Escherichia coli O81 (strain ED1a)</name>
    <dbReference type="NCBI Taxonomy" id="585397"/>
    <lineage>
        <taxon>Bacteria</taxon>
        <taxon>Pseudomonadati</taxon>
        <taxon>Pseudomonadota</taxon>
        <taxon>Gammaproteobacteria</taxon>
        <taxon>Enterobacterales</taxon>
        <taxon>Enterobacteriaceae</taxon>
        <taxon>Escherichia</taxon>
    </lineage>
</organism>
<proteinExistence type="inferred from homology"/>
<evidence type="ECO:0000255" key="1">
    <source>
        <dbReference type="HAMAP-Rule" id="MF_01077"/>
    </source>
</evidence>
<comment type="function">
    <text evidence="1">Required for maturation of 30S ribosomal subunits.</text>
</comment>
<comment type="subcellular location">
    <subcellularLocation>
        <location evidence="1">Cytoplasm</location>
    </subcellularLocation>
</comment>
<comment type="similarity">
    <text evidence="1">Belongs to the RimP family.</text>
</comment>
<accession>B7N0V5</accession>
<keyword id="KW-0963">Cytoplasm</keyword>
<keyword id="KW-0690">Ribosome biogenesis</keyword>
<protein>
    <recommendedName>
        <fullName evidence="1">Ribosome maturation factor RimP</fullName>
    </recommendedName>
</protein>
<feature type="chain" id="PRO_0000384664" description="Ribosome maturation factor RimP">
    <location>
        <begin position="1"/>
        <end position="150"/>
    </location>
</feature>
<gene>
    <name evidence="1" type="primary">rimP</name>
    <name type="ordered locus">ECED1_3830</name>
</gene>
<name>RIMP_ECO81</name>